<accession>Q6P8F8</accession>
<keyword id="KW-0106">Calcium</keyword>
<keyword id="KW-0407">Ion channel</keyword>
<keyword id="KW-0406">Ion transport</keyword>
<keyword id="KW-0472">Membrane</keyword>
<keyword id="KW-0479">Metal-binding</keyword>
<keyword id="KW-0539">Nucleus</keyword>
<keyword id="KW-0630">Potassium</keyword>
<keyword id="KW-0631">Potassium channel</keyword>
<keyword id="KW-0633">Potassium transport</keyword>
<keyword id="KW-1185">Reference proteome</keyword>
<keyword id="KW-0703">Sarcoplasmic reticulum</keyword>
<keyword id="KW-0812">Transmembrane</keyword>
<keyword id="KW-1133">Transmembrane helix</keyword>
<keyword id="KW-0813">Transport</keyword>
<organism>
    <name type="scientific">Xenopus tropicalis</name>
    <name type="common">Western clawed frog</name>
    <name type="synonym">Silurana tropicalis</name>
    <dbReference type="NCBI Taxonomy" id="8364"/>
    <lineage>
        <taxon>Eukaryota</taxon>
        <taxon>Metazoa</taxon>
        <taxon>Chordata</taxon>
        <taxon>Craniata</taxon>
        <taxon>Vertebrata</taxon>
        <taxon>Euteleostomi</taxon>
        <taxon>Amphibia</taxon>
        <taxon>Batrachia</taxon>
        <taxon>Anura</taxon>
        <taxon>Pipoidea</taxon>
        <taxon>Pipidae</taxon>
        <taxon>Xenopodinae</taxon>
        <taxon>Xenopus</taxon>
        <taxon>Silurana</taxon>
    </lineage>
</organism>
<feature type="chain" id="PRO_0000291522" description="Trimeric intracellular cation channel type A">
    <location>
        <begin position="1"/>
        <end position="295"/>
    </location>
</feature>
<feature type="topological domain" description="Lumenal" evidence="6">
    <location>
        <begin position="1"/>
        <end position="11"/>
    </location>
</feature>
<feature type="transmembrane region" description="Helical;Name=1" evidence="4">
    <location>
        <begin position="12"/>
        <end position="32"/>
    </location>
</feature>
<feature type="topological domain" description="Cytoplasmic" evidence="6">
    <location>
        <begin position="33"/>
        <end position="51"/>
    </location>
</feature>
<feature type="transmembrane region" description="Helical;Name=2" evidence="4">
    <location>
        <begin position="52"/>
        <end position="72"/>
    </location>
</feature>
<feature type="topological domain" description="Lumenal" evidence="6">
    <location>
        <begin position="73"/>
        <end position="84"/>
    </location>
</feature>
<feature type="transmembrane region" description="Helical;Name=3" evidence="4">
    <location>
        <begin position="85"/>
        <end position="105"/>
    </location>
</feature>
<feature type="topological domain" description="Cytoplasmic" evidence="6">
    <location>
        <begin position="106"/>
        <end position="144"/>
    </location>
</feature>
<feature type="transmembrane region" description="Helical;Name=4" evidence="4">
    <location>
        <begin position="145"/>
        <end position="165"/>
    </location>
</feature>
<feature type="topological domain" description="Lumenal" evidence="6">
    <location>
        <begin position="166"/>
        <end position="178"/>
    </location>
</feature>
<feature type="transmembrane region" description="Helical;Name=5" evidence="4">
    <location>
        <begin position="179"/>
        <end position="199"/>
    </location>
</feature>
<feature type="topological domain" description="Cytoplasmic" evidence="6">
    <location>
        <begin position="200"/>
        <end position="201"/>
    </location>
</feature>
<feature type="transmembrane region" description="Helical;Name=6" evidence="4">
    <location>
        <begin position="202"/>
        <end position="222"/>
    </location>
</feature>
<feature type="topological domain" description="Lumenal" evidence="6">
    <location>
        <begin position="223"/>
        <end position="233"/>
    </location>
</feature>
<feature type="transmembrane region" description="Helical;Name=7" evidence="4">
    <location>
        <begin position="234"/>
        <end position="254"/>
    </location>
</feature>
<feature type="topological domain" description="Cytoplasmic" evidence="6">
    <location>
        <begin position="255"/>
        <end position="295"/>
    </location>
</feature>
<feature type="region of interest" description="Disordered" evidence="5">
    <location>
        <begin position="259"/>
        <end position="295"/>
    </location>
</feature>
<feature type="compositionally biased region" description="Basic and acidic residues" evidence="5">
    <location>
        <begin position="259"/>
        <end position="286"/>
    </location>
</feature>
<feature type="binding site" evidence="2">
    <location>
        <position position="74"/>
    </location>
    <ligand>
        <name>Ca(2+)</name>
        <dbReference type="ChEBI" id="CHEBI:29108"/>
    </ligand>
</feature>
<feature type="binding site" evidence="3">
    <location>
        <position position="122"/>
    </location>
    <ligand>
        <name>a 1,2-diacyl-sn-glycero-3-phospho-(1D-myo-inositol-4,5-bisphosphate)</name>
        <dbReference type="ChEBI" id="CHEBI:58456"/>
    </ligand>
</feature>
<feature type="binding site" evidence="3">
    <location>
        <position position="126"/>
    </location>
    <ligand>
        <name>a 1,2-diacyl-sn-glycero-3-phospho-(1D-myo-inositol-4,5-bisphosphate)</name>
        <dbReference type="ChEBI" id="CHEBI:58456"/>
    </ligand>
</feature>
<protein>
    <recommendedName>
        <fullName>Trimeric intracellular cation channel type A</fullName>
        <shortName>TRIC-A</shortName>
        <shortName>TRICA</shortName>
    </recommendedName>
    <alternativeName>
        <fullName>Transmembrane protein 38A</fullName>
    </alternativeName>
</protein>
<proteinExistence type="evidence at transcript level"/>
<sequence length="295" mass="33347">MELLSALSLDDLAVAFSKLPVFPLFDVAYYIISILYLKYEPGAVDLSKRSPVASWLCAMLYCFGSYILADVLLGESPIHYFSNNANILLASAVWYLTFFCPLNIFYKIVSFLPLKLVLVGMKEVVRVRKIAMGIHHAHHHYHHGWVIMVLIGWVKGSGVALMSNLEQLLRGVWKPETNEILHMSFPTKASLYGAILFTLQQAHWLPISKAYLIFFFTLFMAICKIYMTATHSHGSPFAIFESGICCVLFGAANGDHDDHGDHHHHHDDHDVSHSTVKSKEELNEGTRKRKTKKAE</sequence>
<evidence type="ECO:0000250" key="1">
    <source>
        <dbReference type="UniProtKB" id="A5A6S6"/>
    </source>
</evidence>
<evidence type="ECO:0000250" key="2">
    <source>
        <dbReference type="UniProtKB" id="Q5ZK43"/>
    </source>
</evidence>
<evidence type="ECO:0000250" key="3">
    <source>
        <dbReference type="UniProtKB" id="Q9NA73"/>
    </source>
</evidence>
<evidence type="ECO:0000255" key="4"/>
<evidence type="ECO:0000256" key="5">
    <source>
        <dbReference type="SAM" id="MobiDB-lite"/>
    </source>
</evidence>
<evidence type="ECO:0000305" key="6"/>
<reference key="1">
    <citation type="submission" date="2003-11" db="EMBL/GenBank/DDBJ databases">
        <authorList>
            <consortium name="NIH - Xenopus Gene Collection (XGC) project"/>
        </authorList>
    </citation>
    <scope>NUCLEOTIDE SEQUENCE [LARGE SCALE MRNA]</scope>
    <source>
        <strain>N6</strain>
        <tissue>Skeletal muscle</tissue>
        <tissue>Tadpole</tissue>
    </source>
</reference>
<comment type="function">
    <text evidence="1">Intracellular monovalent cation channel required for maintenance of rapid intracellular calcium release. Acts as a potassium counter-ion channel that functions in synchronization with calcium release from intracellular stores. Opened by a change of voltage within the sarcoplasmic reticulum lumen.</text>
</comment>
<comment type="catalytic activity">
    <reaction evidence="1">
        <text>K(+)(in) = K(+)(out)</text>
        <dbReference type="Rhea" id="RHEA:29463"/>
        <dbReference type="ChEBI" id="CHEBI:29103"/>
    </reaction>
</comment>
<comment type="activity regulation">
    <text evidence="1">Channel activity is activated by a change of voltage within the sarcoplasmic reticulum lumen and blocked by luminal high Ca(2+) levels.</text>
</comment>
<comment type="subunit">
    <text evidence="1">Homotrimer; conformation seems to be controled by binding to diacylglycerol (DAG).</text>
</comment>
<comment type="subcellular location">
    <subcellularLocation>
        <location evidence="1">Sarcoplasmic reticulum membrane</location>
        <topology evidence="1">Multi-pass membrane protein</topology>
    </subcellularLocation>
    <subcellularLocation>
        <location evidence="1">Nucleus membrane</location>
    </subcellularLocation>
</comment>
<comment type="similarity">
    <text evidence="6">Belongs to the TMEM38 family.</text>
</comment>
<dbReference type="EMBL" id="BC061269">
    <property type="protein sequence ID" value="AAH61269.1"/>
    <property type="molecule type" value="mRNA"/>
</dbReference>
<dbReference type="EMBL" id="BC122046">
    <property type="protein sequence ID" value="AAI22047.1"/>
    <property type="molecule type" value="mRNA"/>
</dbReference>
<dbReference type="RefSeq" id="NP_988996.1">
    <property type="nucleotide sequence ID" value="NM_203665.1"/>
</dbReference>
<dbReference type="SMR" id="Q6P8F8"/>
<dbReference type="FunCoup" id="Q6P8F8">
    <property type="interactions" value="280"/>
</dbReference>
<dbReference type="STRING" id="8364.ENSXETP00000037107"/>
<dbReference type="PaxDb" id="8364-ENSXETP00000046386"/>
<dbReference type="DNASU" id="394592"/>
<dbReference type="GeneID" id="394592"/>
<dbReference type="KEGG" id="xtr:394592"/>
<dbReference type="AGR" id="Xenbase:XB-GENE-5802848"/>
<dbReference type="CTD" id="79041"/>
<dbReference type="Xenbase" id="XB-GENE-5802848">
    <property type="gene designation" value="tmem38a"/>
</dbReference>
<dbReference type="eggNOG" id="KOG3944">
    <property type="taxonomic scope" value="Eukaryota"/>
</dbReference>
<dbReference type="HOGENOM" id="CLU_076376_0_1_1"/>
<dbReference type="InParanoid" id="Q6P8F8"/>
<dbReference type="OMA" id="FSKMAMF"/>
<dbReference type="OrthoDB" id="195817at2759"/>
<dbReference type="PhylomeDB" id="Q6P8F8"/>
<dbReference type="TreeFam" id="TF313483"/>
<dbReference type="Proteomes" id="UP000008143">
    <property type="component" value="Chromosome 1"/>
</dbReference>
<dbReference type="Bgee" id="ENSXETG00000021455">
    <property type="expression patterns" value="Expressed in skeletal muscle tissue and 9 other cell types or tissues"/>
</dbReference>
<dbReference type="GO" id="GO:0031965">
    <property type="term" value="C:nuclear membrane"/>
    <property type="evidence" value="ECO:0000250"/>
    <property type="project" value="UniProtKB"/>
</dbReference>
<dbReference type="GO" id="GO:0033017">
    <property type="term" value="C:sarcoplasmic reticulum membrane"/>
    <property type="evidence" value="ECO:0000250"/>
    <property type="project" value="UniProtKB"/>
</dbReference>
<dbReference type="GO" id="GO:0042802">
    <property type="term" value="F:identical protein binding"/>
    <property type="evidence" value="ECO:0007669"/>
    <property type="project" value="InterPro"/>
</dbReference>
<dbReference type="GO" id="GO:0046872">
    <property type="term" value="F:metal ion binding"/>
    <property type="evidence" value="ECO:0007669"/>
    <property type="project" value="UniProtKB-KW"/>
</dbReference>
<dbReference type="GO" id="GO:0005267">
    <property type="term" value="F:potassium channel activity"/>
    <property type="evidence" value="ECO:0000250"/>
    <property type="project" value="UniProtKB"/>
</dbReference>
<dbReference type="GO" id="GO:0051279">
    <property type="term" value="P:regulation of release of sequestered calcium ion into cytosol"/>
    <property type="evidence" value="ECO:0000250"/>
    <property type="project" value="UniProtKB"/>
</dbReference>
<dbReference type="InterPro" id="IPR007866">
    <property type="entry name" value="TRIC_channel"/>
</dbReference>
<dbReference type="PANTHER" id="PTHR12454">
    <property type="entry name" value="TRIMERIC INTRACELLULAR CATION CHANNEL"/>
    <property type="match status" value="1"/>
</dbReference>
<dbReference type="PANTHER" id="PTHR12454:SF3">
    <property type="entry name" value="TRIMERIC INTRACELLULAR CATION CHANNEL TYPE A"/>
    <property type="match status" value="1"/>
</dbReference>
<dbReference type="Pfam" id="PF05197">
    <property type="entry name" value="TRIC"/>
    <property type="match status" value="1"/>
</dbReference>
<name>TM38A_XENTR</name>
<gene>
    <name type="primary">tmem38a</name>
</gene>